<comment type="function">
    <text evidence="1">The beta subunit is responsible for the synthesis of L-tryptophan from indole and L-serine.</text>
</comment>
<comment type="catalytic activity">
    <reaction evidence="1">
        <text>(1S,2R)-1-C-(indol-3-yl)glycerol 3-phosphate + L-serine = D-glyceraldehyde 3-phosphate + L-tryptophan + H2O</text>
        <dbReference type="Rhea" id="RHEA:10532"/>
        <dbReference type="ChEBI" id="CHEBI:15377"/>
        <dbReference type="ChEBI" id="CHEBI:33384"/>
        <dbReference type="ChEBI" id="CHEBI:57912"/>
        <dbReference type="ChEBI" id="CHEBI:58866"/>
        <dbReference type="ChEBI" id="CHEBI:59776"/>
        <dbReference type="EC" id="4.2.1.20"/>
    </reaction>
</comment>
<comment type="cofactor">
    <cofactor evidence="1">
        <name>pyridoxal 5'-phosphate</name>
        <dbReference type="ChEBI" id="CHEBI:597326"/>
    </cofactor>
</comment>
<comment type="pathway">
    <text evidence="1">Amino-acid biosynthesis; L-tryptophan biosynthesis; L-tryptophan from chorismate: step 5/5.</text>
</comment>
<comment type="subunit">
    <text evidence="1">Tetramer of two alpha and two beta chains.</text>
</comment>
<comment type="similarity">
    <text evidence="1">Belongs to the TrpB family.</text>
</comment>
<dbReference type="EC" id="4.2.1.20" evidence="1"/>
<dbReference type="EMBL" id="CP000920">
    <property type="protein sequence ID" value="ACO20672.1"/>
    <property type="molecule type" value="Genomic_DNA"/>
</dbReference>
<dbReference type="RefSeq" id="WP_000331296.1">
    <property type="nucleotide sequence ID" value="NC_012467.1"/>
</dbReference>
<dbReference type="SMR" id="C1CMD3"/>
<dbReference type="GeneID" id="45652969"/>
<dbReference type="KEGG" id="spp:SPP_1820"/>
<dbReference type="HOGENOM" id="CLU_016734_3_1_9"/>
<dbReference type="UniPathway" id="UPA00035">
    <property type="reaction ID" value="UER00044"/>
</dbReference>
<dbReference type="GO" id="GO:0005737">
    <property type="term" value="C:cytoplasm"/>
    <property type="evidence" value="ECO:0007669"/>
    <property type="project" value="TreeGrafter"/>
</dbReference>
<dbReference type="GO" id="GO:0004834">
    <property type="term" value="F:tryptophan synthase activity"/>
    <property type="evidence" value="ECO:0007669"/>
    <property type="project" value="UniProtKB-UniRule"/>
</dbReference>
<dbReference type="CDD" id="cd06446">
    <property type="entry name" value="Trp-synth_B"/>
    <property type="match status" value="1"/>
</dbReference>
<dbReference type="FunFam" id="3.40.50.1100:FF:000001">
    <property type="entry name" value="Tryptophan synthase beta chain"/>
    <property type="match status" value="1"/>
</dbReference>
<dbReference type="FunFam" id="3.40.50.1100:FF:000004">
    <property type="entry name" value="Tryptophan synthase beta chain"/>
    <property type="match status" value="1"/>
</dbReference>
<dbReference type="Gene3D" id="3.40.50.1100">
    <property type="match status" value="2"/>
</dbReference>
<dbReference type="HAMAP" id="MF_00133">
    <property type="entry name" value="Trp_synth_beta"/>
    <property type="match status" value="1"/>
</dbReference>
<dbReference type="InterPro" id="IPR006653">
    <property type="entry name" value="Trp_synth_b_CS"/>
</dbReference>
<dbReference type="InterPro" id="IPR006654">
    <property type="entry name" value="Trp_synth_beta"/>
</dbReference>
<dbReference type="InterPro" id="IPR023026">
    <property type="entry name" value="Trp_synth_beta/beta-like"/>
</dbReference>
<dbReference type="InterPro" id="IPR001926">
    <property type="entry name" value="TrpB-like_PALP"/>
</dbReference>
<dbReference type="InterPro" id="IPR036052">
    <property type="entry name" value="TrpB-like_PALP_sf"/>
</dbReference>
<dbReference type="NCBIfam" id="TIGR00263">
    <property type="entry name" value="trpB"/>
    <property type="match status" value="1"/>
</dbReference>
<dbReference type="PANTHER" id="PTHR48077:SF3">
    <property type="entry name" value="TRYPTOPHAN SYNTHASE"/>
    <property type="match status" value="1"/>
</dbReference>
<dbReference type="PANTHER" id="PTHR48077">
    <property type="entry name" value="TRYPTOPHAN SYNTHASE-RELATED"/>
    <property type="match status" value="1"/>
</dbReference>
<dbReference type="Pfam" id="PF00291">
    <property type="entry name" value="PALP"/>
    <property type="match status" value="1"/>
</dbReference>
<dbReference type="PIRSF" id="PIRSF001413">
    <property type="entry name" value="Trp_syn_beta"/>
    <property type="match status" value="1"/>
</dbReference>
<dbReference type="SUPFAM" id="SSF53686">
    <property type="entry name" value="Tryptophan synthase beta subunit-like PLP-dependent enzymes"/>
    <property type="match status" value="1"/>
</dbReference>
<dbReference type="PROSITE" id="PS00168">
    <property type="entry name" value="TRP_SYNTHASE_BETA"/>
    <property type="match status" value="1"/>
</dbReference>
<gene>
    <name evidence="1" type="primary">trpB</name>
    <name type="ordered locus">SPP_1820</name>
</gene>
<reference key="1">
    <citation type="journal article" date="2010" name="Genome Biol.">
        <title>Structure and dynamics of the pan-genome of Streptococcus pneumoniae and closely related species.</title>
        <authorList>
            <person name="Donati C."/>
            <person name="Hiller N.L."/>
            <person name="Tettelin H."/>
            <person name="Muzzi A."/>
            <person name="Croucher N.J."/>
            <person name="Angiuoli S.V."/>
            <person name="Oggioni M."/>
            <person name="Dunning Hotopp J.C."/>
            <person name="Hu F.Z."/>
            <person name="Riley D.R."/>
            <person name="Covacci A."/>
            <person name="Mitchell T.J."/>
            <person name="Bentley S.D."/>
            <person name="Kilian M."/>
            <person name="Ehrlich G.D."/>
            <person name="Rappuoli R."/>
            <person name="Moxon E.R."/>
            <person name="Masignani V."/>
        </authorList>
    </citation>
    <scope>NUCLEOTIDE SEQUENCE [LARGE SCALE GENOMIC DNA]</scope>
    <source>
        <strain>P1031</strain>
    </source>
</reference>
<name>TRPB_STRZP</name>
<sequence>MAYQEPNKDGFYGKFGGRFVPETLMTAVLELEKAYRESQADPSFQEELNQLLRQYVGRETPLYYAKNLTQHIGGAKIYLKREDLNHTGAHKINNALGQVWLAKRMGKKKIIAETGAGQHGVATATAAALFNMECTIYMGEEDVKRQALNVFRMELLGAKVEAVTDGSRVLKDAVNAALRSWVANIDDTHYILGSALGPHPFPEIVRDFQSVIGREAKQQYRDMTGQDLPDALVACVGGGSNAIGLFHPFVEDESVAMYGTEAAGLGVDTEHHAATLTKGRPGVLHGSLMDVLQDAHGQILEAFSISAGLDYPGIGPEHSHYHDIKRASYVPVTDEEALEGFQLLSRVEGIIPALESSHAIAFAVKLAKELGPEKSMIVCLSGRGDKDVVQVKDRLEADAAKKGEAHA</sequence>
<organism>
    <name type="scientific">Streptococcus pneumoniae (strain P1031)</name>
    <dbReference type="NCBI Taxonomy" id="488223"/>
    <lineage>
        <taxon>Bacteria</taxon>
        <taxon>Bacillati</taxon>
        <taxon>Bacillota</taxon>
        <taxon>Bacilli</taxon>
        <taxon>Lactobacillales</taxon>
        <taxon>Streptococcaceae</taxon>
        <taxon>Streptococcus</taxon>
    </lineage>
</organism>
<accession>C1CMD3</accession>
<feature type="chain" id="PRO_1000198757" description="Tryptophan synthase beta chain">
    <location>
        <begin position="1"/>
        <end position="407"/>
    </location>
</feature>
<feature type="modified residue" description="N6-(pyridoxal phosphate)lysine" evidence="1">
    <location>
        <position position="91"/>
    </location>
</feature>
<keyword id="KW-0028">Amino-acid biosynthesis</keyword>
<keyword id="KW-0057">Aromatic amino acid biosynthesis</keyword>
<keyword id="KW-0456">Lyase</keyword>
<keyword id="KW-0663">Pyridoxal phosphate</keyword>
<keyword id="KW-0822">Tryptophan biosynthesis</keyword>
<protein>
    <recommendedName>
        <fullName evidence="1">Tryptophan synthase beta chain</fullName>
        <ecNumber evidence="1">4.2.1.20</ecNumber>
    </recommendedName>
</protein>
<evidence type="ECO:0000255" key="1">
    <source>
        <dbReference type="HAMAP-Rule" id="MF_00133"/>
    </source>
</evidence>
<proteinExistence type="inferred from homology"/>